<accession>A1SBR7</accession>
<dbReference type="EC" id="2.1.1.181" evidence="1"/>
<dbReference type="EMBL" id="CP000507">
    <property type="protein sequence ID" value="ABM01824.1"/>
    <property type="molecule type" value="Genomic_DNA"/>
</dbReference>
<dbReference type="RefSeq" id="WP_011761727.1">
    <property type="nucleotide sequence ID" value="NC_008700.1"/>
</dbReference>
<dbReference type="SMR" id="A1SBR7"/>
<dbReference type="STRING" id="326297.Sama_3621"/>
<dbReference type="KEGG" id="saz:Sama_3621"/>
<dbReference type="eggNOG" id="COG3129">
    <property type="taxonomic scope" value="Bacteria"/>
</dbReference>
<dbReference type="HOGENOM" id="CLU_027534_3_0_6"/>
<dbReference type="OrthoDB" id="1115728at2"/>
<dbReference type="Proteomes" id="UP000009175">
    <property type="component" value="Chromosome"/>
</dbReference>
<dbReference type="GO" id="GO:0005737">
    <property type="term" value="C:cytoplasm"/>
    <property type="evidence" value="ECO:0007669"/>
    <property type="project" value="UniProtKB-SubCell"/>
</dbReference>
<dbReference type="GO" id="GO:0052907">
    <property type="term" value="F:23S rRNA (adenine(1618)-N(6))-methyltransferase activity"/>
    <property type="evidence" value="ECO:0007669"/>
    <property type="project" value="UniProtKB-EC"/>
</dbReference>
<dbReference type="GO" id="GO:0070475">
    <property type="term" value="P:rRNA base methylation"/>
    <property type="evidence" value="ECO:0007669"/>
    <property type="project" value="TreeGrafter"/>
</dbReference>
<dbReference type="CDD" id="cd02440">
    <property type="entry name" value="AdoMet_MTases"/>
    <property type="match status" value="1"/>
</dbReference>
<dbReference type="Gene3D" id="3.40.50.150">
    <property type="entry name" value="Vaccinia Virus protein VP39"/>
    <property type="match status" value="1"/>
</dbReference>
<dbReference type="HAMAP" id="MF_01848">
    <property type="entry name" value="23SrRNA_methyltr_F"/>
    <property type="match status" value="1"/>
</dbReference>
<dbReference type="InterPro" id="IPR010286">
    <property type="entry name" value="METTL16/RlmF"/>
</dbReference>
<dbReference type="InterPro" id="IPR016909">
    <property type="entry name" value="rRNA_lsu_MeTfrase_F"/>
</dbReference>
<dbReference type="InterPro" id="IPR029063">
    <property type="entry name" value="SAM-dependent_MTases_sf"/>
</dbReference>
<dbReference type="NCBIfam" id="NF008725">
    <property type="entry name" value="PRK11727.1"/>
    <property type="match status" value="1"/>
</dbReference>
<dbReference type="PANTHER" id="PTHR13393:SF0">
    <property type="entry name" value="RNA N6-ADENOSINE-METHYLTRANSFERASE METTL16"/>
    <property type="match status" value="1"/>
</dbReference>
<dbReference type="PANTHER" id="PTHR13393">
    <property type="entry name" value="SAM-DEPENDENT METHYLTRANSFERASE"/>
    <property type="match status" value="1"/>
</dbReference>
<dbReference type="Pfam" id="PF05971">
    <property type="entry name" value="Methyltransf_10"/>
    <property type="match status" value="1"/>
</dbReference>
<dbReference type="PIRSF" id="PIRSF029038">
    <property type="entry name" value="Mtase_YbiN_prd"/>
    <property type="match status" value="1"/>
</dbReference>
<dbReference type="SUPFAM" id="SSF53335">
    <property type="entry name" value="S-adenosyl-L-methionine-dependent methyltransferases"/>
    <property type="match status" value="1"/>
</dbReference>
<evidence type="ECO:0000255" key="1">
    <source>
        <dbReference type="HAMAP-Rule" id="MF_01848"/>
    </source>
</evidence>
<evidence type="ECO:0000256" key="2">
    <source>
        <dbReference type="SAM" id="MobiDB-lite"/>
    </source>
</evidence>
<reference key="1">
    <citation type="submission" date="2006-12" db="EMBL/GenBank/DDBJ databases">
        <title>Complete sequence of Shewanella amazonensis SB2B.</title>
        <authorList>
            <consortium name="US DOE Joint Genome Institute"/>
            <person name="Copeland A."/>
            <person name="Lucas S."/>
            <person name="Lapidus A."/>
            <person name="Barry K."/>
            <person name="Detter J.C."/>
            <person name="Glavina del Rio T."/>
            <person name="Hammon N."/>
            <person name="Israni S."/>
            <person name="Dalin E."/>
            <person name="Tice H."/>
            <person name="Pitluck S."/>
            <person name="Munk A.C."/>
            <person name="Brettin T."/>
            <person name="Bruce D."/>
            <person name="Han C."/>
            <person name="Tapia R."/>
            <person name="Gilna P."/>
            <person name="Schmutz J."/>
            <person name="Larimer F."/>
            <person name="Land M."/>
            <person name="Hauser L."/>
            <person name="Kyrpides N."/>
            <person name="Mikhailova N."/>
            <person name="Fredrickson J."/>
            <person name="Richardson P."/>
        </authorList>
    </citation>
    <scope>NUCLEOTIDE SEQUENCE [LARGE SCALE GENOMIC DNA]</scope>
    <source>
        <strain>ATCC BAA-1098 / SB2B</strain>
    </source>
</reference>
<keyword id="KW-0963">Cytoplasm</keyword>
<keyword id="KW-0489">Methyltransferase</keyword>
<keyword id="KW-1185">Reference proteome</keyword>
<keyword id="KW-0698">rRNA processing</keyword>
<keyword id="KW-0949">S-adenosyl-L-methionine</keyword>
<keyword id="KW-0808">Transferase</keyword>
<protein>
    <recommendedName>
        <fullName evidence="1">Ribosomal RNA large subunit methyltransferase F</fullName>
        <ecNumber evidence="1">2.1.1.181</ecNumber>
    </recommendedName>
    <alternativeName>
        <fullName evidence="1">23S rRNA mA1618 methyltransferase</fullName>
    </alternativeName>
    <alternativeName>
        <fullName evidence="1">rRNA adenine N-6-methyltransferase</fullName>
    </alternativeName>
</protein>
<feature type="chain" id="PRO_0000349950" description="Ribosomal RNA large subunit methyltransferase F">
    <location>
        <begin position="1"/>
        <end position="319"/>
    </location>
</feature>
<feature type="region of interest" description="Disordered" evidence="2">
    <location>
        <begin position="1"/>
        <end position="25"/>
    </location>
</feature>
<feature type="compositionally biased region" description="Polar residues" evidence="2">
    <location>
        <begin position="7"/>
        <end position="16"/>
    </location>
</feature>
<organism>
    <name type="scientific">Shewanella amazonensis (strain ATCC BAA-1098 / SB2B)</name>
    <dbReference type="NCBI Taxonomy" id="326297"/>
    <lineage>
        <taxon>Bacteria</taxon>
        <taxon>Pseudomonadati</taxon>
        <taxon>Pseudomonadota</taxon>
        <taxon>Gammaproteobacteria</taxon>
        <taxon>Alteromonadales</taxon>
        <taxon>Shewanellaceae</taxon>
        <taxon>Shewanella</taxon>
    </lineage>
</organism>
<name>RLMF_SHEAM</name>
<sequence>MAPFFSAMTSKKQSQGLPKGPHPDNAHRDGYDFSALVASHPPLKPFVRANAYGNLSIDFALPEAVKALNCALLKHHYGISRWDIPKGFLCPPIPGRVDYLHHLEDLLRQTPGTDGLPLLDIGTGANGIYALLAASRFGRAVVATDIAKASLTNVATILKANPGLEKRISLRFQSNPRHILTGVTQTNEQFAACVCNPPFHASAAEAALGTNRKLEGLAKSRGQRHISGPGKPQTLNFGGQDAELWCDGGERSFLLRLIDESARLPDLCVWFTTLVSKSDNLRPCKRRLEQRGASEIKVIEMQQGQKITRILAWRFESVT</sequence>
<gene>
    <name evidence="1" type="primary">rlmF</name>
    <name type="ordered locus">Sama_3621</name>
</gene>
<proteinExistence type="inferred from homology"/>
<comment type="function">
    <text evidence="1">Specifically methylates the adenine in position 1618 of 23S rRNA.</text>
</comment>
<comment type="catalytic activity">
    <reaction evidence="1">
        <text>adenosine(1618) in 23S rRNA + S-adenosyl-L-methionine = N(6)-methyladenosine(1618) in 23S rRNA + S-adenosyl-L-homocysteine + H(+)</text>
        <dbReference type="Rhea" id="RHEA:16497"/>
        <dbReference type="Rhea" id="RHEA-COMP:10229"/>
        <dbReference type="Rhea" id="RHEA-COMP:10231"/>
        <dbReference type="ChEBI" id="CHEBI:15378"/>
        <dbReference type="ChEBI" id="CHEBI:57856"/>
        <dbReference type="ChEBI" id="CHEBI:59789"/>
        <dbReference type="ChEBI" id="CHEBI:74411"/>
        <dbReference type="ChEBI" id="CHEBI:74449"/>
        <dbReference type="EC" id="2.1.1.181"/>
    </reaction>
</comment>
<comment type="subcellular location">
    <subcellularLocation>
        <location evidence="1">Cytoplasm</location>
    </subcellularLocation>
</comment>
<comment type="similarity">
    <text evidence="1">Belongs to the methyltransferase superfamily. METTL16/RlmF family.</text>
</comment>